<sequence length="462" mass="50785">MNTRIERDTLGEMHVPQDKLWGAQTQRSYENFHIGTEKMPMEIIYAFALLKKAAANVNKKLGQLSAEKADAITWAANEVLAGKHDDHFPLFVWQTGSGTQSNMNMNEVLARRGNQLLQEKGLDVTIHPNDDVNRSQSSNDTFPTAMHIAAYNKLDDHLLPTLQMFKQTLHQKAKQFDDVIKLGRTHLQDATPLTLGQEISGWARMLEKTEQMIRESMIYLQELAIGGTAVGTGVNAHPKFGEMVAADIANETGKPFKSAANKFHALTSHDELVHTHGALKALAADLFKIANDIRWLASGPRGGLGELIIPANEPGSSIMPGKVNPTQSEALTMITSQVIGNDATIAFAASQGNFELNVFKPVIIYNFLQSTTLLTDGLRTFHDKCLIGLEANETIIKKHLNESLMLVTALNPHIGYENAAKIAKKAHAEGLTLKEAAMQSGLLTEEEFEKMVDPAKMVHPQG</sequence>
<accession>Q9KCX4</accession>
<gene>
    <name evidence="1" type="primary">fumC</name>
    <name type="synonym">citG</name>
    <name type="ordered locus">BH1445</name>
</gene>
<comment type="function">
    <text evidence="1">Involved in the TCA cycle. Catalyzes the stereospecific interconversion of fumarate to L-malate.</text>
</comment>
<comment type="catalytic activity">
    <reaction evidence="1">
        <text>(S)-malate = fumarate + H2O</text>
        <dbReference type="Rhea" id="RHEA:12460"/>
        <dbReference type="ChEBI" id="CHEBI:15377"/>
        <dbReference type="ChEBI" id="CHEBI:15589"/>
        <dbReference type="ChEBI" id="CHEBI:29806"/>
        <dbReference type="EC" id="4.2.1.2"/>
    </reaction>
</comment>
<comment type="pathway">
    <text evidence="1">Carbohydrate metabolism; tricarboxylic acid cycle; (S)-malate from fumarate: step 1/1.</text>
</comment>
<comment type="subunit">
    <text evidence="1">Homotetramer.</text>
</comment>
<comment type="subcellular location">
    <subcellularLocation>
        <location evidence="1">Cytoplasm</location>
    </subcellularLocation>
</comment>
<comment type="miscellaneous">
    <text evidence="1">There are 2 substrate-binding sites: the catalytic A site, and the non-catalytic B site that may play a role in the transfer of substrate or product between the active site and the solvent. Alternatively, the B site may bind allosteric effectors.</text>
</comment>
<comment type="similarity">
    <text evidence="1">Belongs to the class-II fumarase/aspartase family. Fumarase subfamily.</text>
</comment>
<evidence type="ECO:0000255" key="1">
    <source>
        <dbReference type="HAMAP-Rule" id="MF_00743"/>
    </source>
</evidence>
<organism>
    <name type="scientific">Halalkalibacterium halodurans (strain ATCC BAA-125 / DSM 18197 / FERM 7344 / JCM 9153 / C-125)</name>
    <name type="common">Bacillus halodurans</name>
    <dbReference type="NCBI Taxonomy" id="272558"/>
    <lineage>
        <taxon>Bacteria</taxon>
        <taxon>Bacillati</taxon>
        <taxon>Bacillota</taxon>
        <taxon>Bacilli</taxon>
        <taxon>Bacillales</taxon>
        <taxon>Bacillaceae</taxon>
        <taxon>Halalkalibacterium (ex Joshi et al. 2022)</taxon>
    </lineage>
</organism>
<keyword id="KW-0963">Cytoplasm</keyword>
<keyword id="KW-0456">Lyase</keyword>
<keyword id="KW-1185">Reference proteome</keyword>
<keyword id="KW-0816">Tricarboxylic acid cycle</keyword>
<protein>
    <recommendedName>
        <fullName evidence="1">Fumarate hydratase class II</fullName>
        <shortName evidence="1">Fumarase C</shortName>
        <ecNumber evidence="1">4.2.1.2</ecNumber>
    </recommendedName>
    <alternativeName>
        <fullName evidence="1">Aerobic fumarase</fullName>
    </alternativeName>
    <alternativeName>
        <fullName evidence="1">Iron-independent fumarase</fullName>
    </alternativeName>
</protein>
<dbReference type="EC" id="4.2.1.2" evidence="1"/>
<dbReference type="EMBL" id="BA000004">
    <property type="protein sequence ID" value="BAB05164.1"/>
    <property type="molecule type" value="Genomic_DNA"/>
</dbReference>
<dbReference type="PIR" id="E83830">
    <property type="entry name" value="E83830"/>
</dbReference>
<dbReference type="RefSeq" id="WP_010897610.1">
    <property type="nucleotide sequence ID" value="NC_002570.2"/>
</dbReference>
<dbReference type="SMR" id="Q9KCX4"/>
<dbReference type="STRING" id="272558.gene:10727343"/>
<dbReference type="KEGG" id="bha:BH1445"/>
<dbReference type="eggNOG" id="COG0114">
    <property type="taxonomic scope" value="Bacteria"/>
</dbReference>
<dbReference type="HOGENOM" id="CLU_021594_4_1_9"/>
<dbReference type="OrthoDB" id="9802809at2"/>
<dbReference type="UniPathway" id="UPA00223">
    <property type="reaction ID" value="UER01007"/>
</dbReference>
<dbReference type="Proteomes" id="UP000001258">
    <property type="component" value="Chromosome"/>
</dbReference>
<dbReference type="GO" id="GO:0005737">
    <property type="term" value="C:cytoplasm"/>
    <property type="evidence" value="ECO:0007669"/>
    <property type="project" value="UniProtKB-SubCell"/>
</dbReference>
<dbReference type="GO" id="GO:0004333">
    <property type="term" value="F:fumarate hydratase activity"/>
    <property type="evidence" value="ECO:0007669"/>
    <property type="project" value="UniProtKB-UniRule"/>
</dbReference>
<dbReference type="GO" id="GO:0006106">
    <property type="term" value="P:fumarate metabolic process"/>
    <property type="evidence" value="ECO:0007669"/>
    <property type="project" value="InterPro"/>
</dbReference>
<dbReference type="GO" id="GO:0006108">
    <property type="term" value="P:malate metabolic process"/>
    <property type="evidence" value="ECO:0007669"/>
    <property type="project" value="TreeGrafter"/>
</dbReference>
<dbReference type="GO" id="GO:0006099">
    <property type="term" value="P:tricarboxylic acid cycle"/>
    <property type="evidence" value="ECO:0007669"/>
    <property type="project" value="UniProtKB-UniRule"/>
</dbReference>
<dbReference type="CDD" id="cd01362">
    <property type="entry name" value="Fumarase_classII"/>
    <property type="match status" value="1"/>
</dbReference>
<dbReference type="FunFam" id="1.10.40.30:FF:000002">
    <property type="entry name" value="Fumarate hydratase class II"/>
    <property type="match status" value="1"/>
</dbReference>
<dbReference type="FunFam" id="1.10.275.10:FF:000001">
    <property type="entry name" value="Fumarate hydratase, mitochondrial"/>
    <property type="match status" value="1"/>
</dbReference>
<dbReference type="FunFam" id="1.20.200.10:FF:000001">
    <property type="entry name" value="Fumarate hydratase, mitochondrial"/>
    <property type="match status" value="1"/>
</dbReference>
<dbReference type="Gene3D" id="1.10.40.30">
    <property type="entry name" value="Fumarase/aspartase (C-terminal domain)"/>
    <property type="match status" value="1"/>
</dbReference>
<dbReference type="Gene3D" id="1.20.200.10">
    <property type="entry name" value="Fumarase/aspartase (Central domain)"/>
    <property type="match status" value="1"/>
</dbReference>
<dbReference type="Gene3D" id="1.10.275.10">
    <property type="entry name" value="Fumarase/aspartase (N-terminal domain)"/>
    <property type="match status" value="1"/>
</dbReference>
<dbReference type="HAMAP" id="MF_00743">
    <property type="entry name" value="FumaraseC"/>
    <property type="match status" value="1"/>
</dbReference>
<dbReference type="InterPro" id="IPR005677">
    <property type="entry name" value="Fum_hydII"/>
</dbReference>
<dbReference type="InterPro" id="IPR024083">
    <property type="entry name" value="Fumarase/histidase_N"/>
</dbReference>
<dbReference type="InterPro" id="IPR018951">
    <property type="entry name" value="Fumarase_C_C"/>
</dbReference>
<dbReference type="InterPro" id="IPR020557">
    <property type="entry name" value="Fumarate_lyase_CS"/>
</dbReference>
<dbReference type="InterPro" id="IPR000362">
    <property type="entry name" value="Fumarate_lyase_fam"/>
</dbReference>
<dbReference type="InterPro" id="IPR022761">
    <property type="entry name" value="Fumarate_lyase_N"/>
</dbReference>
<dbReference type="InterPro" id="IPR008948">
    <property type="entry name" value="L-Aspartase-like"/>
</dbReference>
<dbReference type="NCBIfam" id="TIGR00979">
    <property type="entry name" value="fumC_II"/>
    <property type="match status" value="1"/>
</dbReference>
<dbReference type="NCBIfam" id="NF008909">
    <property type="entry name" value="PRK12273.1"/>
    <property type="match status" value="1"/>
</dbReference>
<dbReference type="PANTHER" id="PTHR11444">
    <property type="entry name" value="ASPARTATEAMMONIA/ARGININOSUCCINATE/ADENYLOSUCCINATE LYASE"/>
    <property type="match status" value="1"/>
</dbReference>
<dbReference type="PANTHER" id="PTHR11444:SF1">
    <property type="entry name" value="FUMARATE HYDRATASE, MITOCHONDRIAL"/>
    <property type="match status" value="1"/>
</dbReference>
<dbReference type="Pfam" id="PF10415">
    <property type="entry name" value="FumaraseC_C"/>
    <property type="match status" value="1"/>
</dbReference>
<dbReference type="Pfam" id="PF00206">
    <property type="entry name" value="Lyase_1"/>
    <property type="match status" value="1"/>
</dbReference>
<dbReference type="PRINTS" id="PR00145">
    <property type="entry name" value="ARGSUCLYASE"/>
</dbReference>
<dbReference type="PRINTS" id="PR00149">
    <property type="entry name" value="FUMRATELYASE"/>
</dbReference>
<dbReference type="SUPFAM" id="SSF48557">
    <property type="entry name" value="L-aspartase-like"/>
    <property type="match status" value="1"/>
</dbReference>
<dbReference type="PROSITE" id="PS00163">
    <property type="entry name" value="FUMARATE_LYASES"/>
    <property type="match status" value="1"/>
</dbReference>
<feature type="chain" id="PRO_0000161254" description="Fumarate hydratase class II">
    <location>
        <begin position="1"/>
        <end position="462"/>
    </location>
</feature>
<feature type="active site" description="Proton donor/acceptor" evidence="1">
    <location>
        <position position="186"/>
    </location>
</feature>
<feature type="active site" evidence="1">
    <location>
        <position position="316"/>
    </location>
</feature>
<feature type="binding site" evidence="1">
    <location>
        <begin position="97"/>
        <end position="99"/>
    </location>
    <ligand>
        <name>substrate</name>
    </ligand>
</feature>
<feature type="binding site" description="in site B" evidence="1">
    <location>
        <begin position="127"/>
        <end position="130"/>
    </location>
    <ligand>
        <name>substrate</name>
    </ligand>
</feature>
<feature type="binding site" evidence="1">
    <location>
        <begin position="137"/>
        <end position="139"/>
    </location>
    <ligand>
        <name>substrate</name>
    </ligand>
</feature>
<feature type="binding site" evidence="1">
    <location>
        <position position="185"/>
    </location>
    <ligand>
        <name>substrate</name>
    </ligand>
</feature>
<feature type="binding site" evidence="1">
    <location>
        <position position="317"/>
    </location>
    <ligand>
        <name>substrate</name>
    </ligand>
</feature>
<feature type="binding site" evidence="1">
    <location>
        <begin position="322"/>
        <end position="324"/>
    </location>
    <ligand>
        <name>substrate</name>
    </ligand>
</feature>
<feature type="site" description="Important for catalytic activity" evidence="1">
    <location>
        <position position="329"/>
    </location>
</feature>
<proteinExistence type="inferred from homology"/>
<name>FUMC_HALH5</name>
<reference key="1">
    <citation type="journal article" date="2000" name="Nucleic Acids Res.">
        <title>Complete genome sequence of the alkaliphilic bacterium Bacillus halodurans and genomic sequence comparison with Bacillus subtilis.</title>
        <authorList>
            <person name="Takami H."/>
            <person name="Nakasone K."/>
            <person name="Takaki Y."/>
            <person name="Maeno G."/>
            <person name="Sasaki R."/>
            <person name="Masui N."/>
            <person name="Fuji F."/>
            <person name="Hirama C."/>
            <person name="Nakamura Y."/>
            <person name="Ogasawara N."/>
            <person name="Kuhara S."/>
            <person name="Horikoshi K."/>
        </authorList>
    </citation>
    <scope>NUCLEOTIDE SEQUENCE [LARGE SCALE GENOMIC DNA]</scope>
    <source>
        <strain>ATCC BAA-125 / DSM 18197 / FERM 7344 / JCM 9153 / C-125</strain>
    </source>
</reference>